<keyword id="KW-0687">Ribonucleoprotein</keyword>
<keyword id="KW-0689">Ribosomal protein</keyword>
<keyword id="KW-0694">RNA-binding</keyword>
<keyword id="KW-0699">rRNA-binding</keyword>
<evidence type="ECO:0000255" key="1">
    <source>
        <dbReference type="HAMAP-Rule" id="MF_00500"/>
    </source>
</evidence>
<evidence type="ECO:0000256" key="2">
    <source>
        <dbReference type="SAM" id="MobiDB-lite"/>
    </source>
</evidence>
<evidence type="ECO:0000305" key="3"/>
<proteinExistence type="inferred from homology"/>
<dbReference type="EMBL" id="CP001615">
    <property type="protein sequence ID" value="ACQ69556.1"/>
    <property type="molecule type" value="Genomic_DNA"/>
</dbReference>
<dbReference type="RefSeq" id="WP_012726675.1">
    <property type="nucleotide sequence ID" value="NZ_MOEL01000008.1"/>
</dbReference>
<dbReference type="SMR" id="C4L434"/>
<dbReference type="STRING" id="360911.EAT1b_0625"/>
<dbReference type="GeneID" id="94371760"/>
<dbReference type="KEGG" id="eat:EAT1b_0625"/>
<dbReference type="eggNOG" id="COG0268">
    <property type="taxonomic scope" value="Bacteria"/>
</dbReference>
<dbReference type="HOGENOM" id="CLU_160655_1_0_9"/>
<dbReference type="OrthoDB" id="9808392at2"/>
<dbReference type="Proteomes" id="UP000000716">
    <property type="component" value="Chromosome"/>
</dbReference>
<dbReference type="GO" id="GO:0005829">
    <property type="term" value="C:cytosol"/>
    <property type="evidence" value="ECO:0007669"/>
    <property type="project" value="TreeGrafter"/>
</dbReference>
<dbReference type="GO" id="GO:0015935">
    <property type="term" value="C:small ribosomal subunit"/>
    <property type="evidence" value="ECO:0007669"/>
    <property type="project" value="TreeGrafter"/>
</dbReference>
<dbReference type="GO" id="GO:0070181">
    <property type="term" value="F:small ribosomal subunit rRNA binding"/>
    <property type="evidence" value="ECO:0007669"/>
    <property type="project" value="TreeGrafter"/>
</dbReference>
<dbReference type="GO" id="GO:0003735">
    <property type="term" value="F:structural constituent of ribosome"/>
    <property type="evidence" value="ECO:0007669"/>
    <property type="project" value="InterPro"/>
</dbReference>
<dbReference type="GO" id="GO:0006412">
    <property type="term" value="P:translation"/>
    <property type="evidence" value="ECO:0007669"/>
    <property type="project" value="UniProtKB-UniRule"/>
</dbReference>
<dbReference type="FunFam" id="1.20.58.110:FF:000001">
    <property type="entry name" value="30S ribosomal protein S20"/>
    <property type="match status" value="1"/>
</dbReference>
<dbReference type="Gene3D" id="1.20.58.110">
    <property type="entry name" value="Ribosomal protein S20"/>
    <property type="match status" value="1"/>
</dbReference>
<dbReference type="HAMAP" id="MF_00500">
    <property type="entry name" value="Ribosomal_bS20"/>
    <property type="match status" value="1"/>
</dbReference>
<dbReference type="InterPro" id="IPR002583">
    <property type="entry name" value="Ribosomal_bS20"/>
</dbReference>
<dbReference type="InterPro" id="IPR036510">
    <property type="entry name" value="Ribosomal_bS20_sf"/>
</dbReference>
<dbReference type="NCBIfam" id="TIGR00029">
    <property type="entry name" value="S20"/>
    <property type="match status" value="1"/>
</dbReference>
<dbReference type="PANTHER" id="PTHR33398">
    <property type="entry name" value="30S RIBOSOMAL PROTEIN S20"/>
    <property type="match status" value="1"/>
</dbReference>
<dbReference type="PANTHER" id="PTHR33398:SF1">
    <property type="entry name" value="SMALL RIBOSOMAL SUBUNIT PROTEIN BS20C"/>
    <property type="match status" value="1"/>
</dbReference>
<dbReference type="Pfam" id="PF01649">
    <property type="entry name" value="Ribosomal_S20p"/>
    <property type="match status" value="1"/>
</dbReference>
<dbReference type="SUPFAM" id="SSF46992">
    <property type="entry name" value="Ribosomal protein S20"/>
    <property type="match status" value="1"/>
</dbReference>
<name>RS20_EXISA</name>
<feature type="chain" id="PRO_1000206498" description="Small ribosomal subunit protein bS20">
    <location>
        <begin position="1"/>
        <end position="86"/>
    </location>
</feature>
<feature type="region of interest" description="Disordered" evidence="2">
    <location>
        <begin position="1"/>
        <end position="25"/>
    </location>
</feature>
<protein>
    <recommendedName>
        <fullName evidence="1">Small ribosomal subunit protein bS20</fullName>
    </recommendedName>
    <alternativeName>
        <fullName evidence="3">30S ribosomal protein S20</fullName>
    </alternativeName>
</protein>
<reference key="1">
    <citation type="journal article" date="2011" name="J. Bacteriol.">
        <title>Complete genome sequence of the Thermophilic Bacterium Exiguobacterium sp. AT1b.</title>
        <authorList>
            <person name="Vishnivetskaya T.A."/>
            <person name="Lucas S."/>
            <person name="Copeland A."/>
            <person name="Lapidus A."/>
            <person name="Glavina del Rio T."/>
            <person name="Dalin E."/>
            <person name="Tice H."/>
            <person name="Bruce D.C."/>
            <person name="Goodwin L.A."/>
            <person name="Pitluck S."/>
            <person name="Saunders E."/>
            <person name="Brettin T."/>
            <person name="Detter C."/>
            <person name="Han C."/>
            <person name="Larimer F."/>
            <person name="Land M.L."/>
            <person name="Hauser L.J."/>
            <person name="Kyrpides N.C."/>
            <person name="Ovchinnikova G."/>
            <person name="Kathariou S."/>
            <person name="Ramaley R.F."/>
            <person name="Rodrigues D.F."/>
            <person name="Hendrix C."/>
            <person name="Richardson P."/>
            <person name="Tiedje J.M."/>
        </authorList>
    </citation>
    <scope>NUCLEOTIDE SEQUENCE [LARGE SCALE GENOMIC DNA]</scope>
    <source>
        <strain>ATCC BAA-1283 / AT1b</strain>
    </source>
</reference>
<comment type="function">
    <text evidence="1">Binds directly to 16S ribosomal RNA.</text>
</comment>
<comment type="similarity">
    <text evidence="1">Belongs to the bacterial ribosomal protein bS20 family.</text>
</comment>
<accession>C4L434</accession>
<gene>
    <name evidence="1" type="primary">rpsT</name>
    <name type="ordered locus">EAT1b_0625</name>
</gene>
<sequence>MANIKSAIKRAKTSEKRRVANSQEKAAMRTAVKRVDALVLEGNKEAAQEAFVLATKKLDKAASKGLIHKNKAGRDKSRLAARIAAL</sequence>
<organism>
    <name type="scientific">Exiguobacterium sp. (strain ATCC BAA-1283 / AT1b)</name>
    <dbReference type="NCBI Taxonomy" id="360911"/>
    <lineage>
        <taxon>Bacteria</taxon>
        <taxon>Bacillati</taxon>
        <taxon>Bacillota</taxon>
        <taxon>Bacilli</taxon>
        <taxon>Bacillales</taxon>
        <taxon>Bacillales Family XII. Incertae Sedis</taxon>
        <taxon>Exiguobacterium</taxon>
    </lineage>
</organism>